<name>ESSE_STAA8</name>
<reference key="1">
    <citation type="book" date="2006" name="Gram positive pathogens, 2nd edition">
        <title>The Staphylococcus aureus NCTC 8325 genome.</title>
        <editorList>
            <person name="Fischetti V."/>
            <person name="Novick R."/>
            <person name="Ferretti J."/>
            <person name="Portnoy D."/>
            <person name="Rood J."/>
        </editorList>
        <authorList>
            <person name="Gillaspy A.F."/>
            <person name="Worrell V."/>
            <person name="Orvis J."/>
            <person name="Roe B.A."/>
            <person name="Dyer D.W."/>
            <person name="Iandolo J.J."/>
        </authorList>
    </citation>
    <scope>NUCLEOTIDE SEQUENCE [LARGE SCALE GENOMIC DNA]</scope>
    <source>
        <strain>NCTC 8325 / PS 47</strain>
    </source>
</reference>
<reference key="2">
    <citation type="journal article" date="2016" name="Nat. Microbiol.">
        <title>The type VII secretion system of Staphylococcus aureus secretes a nuclease toxin that targets competitor bacteria.</title>
        <authorList>
            <person name="Cao Z."/>
            <person name="Casabona M.G."/>
            <person name="Kneuper H."/>
            <person name="Chalmers J.D."/>
            <person name="Palmer T."/>
        </authorList>
    </citation>
    <scope>FUNCTION</scope>
    <scope>SUBCELLULAR LOCATION</scope>
    <scope>INTERACTION WITH ESSG; ESSD AND ESSC</scope>
    <source>
        <strain>NCTC 8325 / PS 47</strain>
    </source>
</reference>
<gene>
    <name evidence="2" type="primary">essE</name>
    <name type="synonym">esaE</name>
    <name type="ordered locus">SAOUHSC_00266</name>
</gene>
<proteinExistence type="evidence at protein level"/>
<comment type="function">
    <text evidence="1">Component of the type VII secretion system (Ess). Plays a role in Esx protein secretion. Plays an essential role in the processing and secretion of EssD.</text>
</comment>
<comment type="subunit">
    <text evidence="1">Interacts with EssD (PubMed:27723728). Interacts with EssG (PubMed:27723728). Interacts with EssC (PubMed:27723728).</text>
</comment>
<comment type="subcellular location">
    <subcellularLocation>
        <location evidence="1">Secreted</location>
    </subcellularLocation>
</comment>
<keyword id="KW-1185">Reference proteome</keyword>
<keyword id="KW-0964">Secreted</keyword>
<keyword id="KW-0843">Virulence</keyword>
<dbReference type="EMBL" id="CP000253">
    <property type="protein sequence ID" value="ABD29439.1"/>
    <property type="molecule type" value="Genomic_DNA"/>
</dbReference>
<dbReference type="RefSeq" id="WP_000655875.1">
    <property type="nucleotide sequence ID" value="NZ_LS483365.1"/>
</dbReference>
<dbReference type="RefSeq" id="YP_498859.1">
    <property type="nucleotide sequence ID" value="NC_007795.1"/>
</dbReference>
<dbReference type="STRING" id="93061.SAOUHSC_00266"/>
<dbReference type="GeneID" id="3919207"/>
<dbReference type="KEGG" id="sao:SAOUHSC_00266"/>
<dbReference type="PATRIC" id="fig|93061.5.peg.244"/>
<dbReference type="HOGENOM" id="CLU_124476_0_0_9"/>
<dbReference type="OrthoDB" id="9988322at2"/>
<dbReference type="Proteomes" id="UP000008816">
    <property type="component" value="Chromosome"/>
</dbReference>
<dbReference type="GO" id="GO:0005576">
    <property type="term" value="C:extracellular region"/>
    <property type="evidence" value="ECO:0007669"/>
    <property type="project" value="UniProtKB-SubCell"/>
</dbReference>
<dbReference type="InterPro" id="IPR031682">
    <property type="entry name" value="EsaE"/>
</dbReference>
<dbReference type="Pfam" id="PF16887">
    <property type="entry name" value="DUF5081"/>
    <property type="match status" value="1"/>
</dbReference>
<sequence>MKDVKRIDYFSYEELTILGGSKLPLVNFELFDPSNFEEAKAALIEKELVTENDKLTDAGFKVATLVREYISAIVNIRINDMYFAPFSYEKDEYILLSRFKNNGFQIRIINKDIAWWSIVQSYPLLMRQEKSNDWDFKQIDDETLENLNNESIDTIGRVLEIEIYNHQGDPQQSLYNIYEQNDLLFIRYPLKDKVLNVHIGVINTFIRELFGFDTDENHINKAEE</sequence>
<organism>
    <name type="scientific">Staphylococcus aureus (strain NCTC 8325 / PS 47)</name>
    <dbReference type="NCBI Taxonomy" id="93061"/>
    <lineage>
        <taxon>Bacteria</taxon>
        <taxon>Bacillati</taxon>
        <taxon>Bacillota</taxon>
        <taxon>Bacilli</taxon>
        <taxon>Bacillales</taxon>
        <taxon>Staphylococcaceae</taxon>
        <taxon>Staphylococcus</taxon>
    </lineage>
</organism>
<feature type="chain" id="PRO_0000448086" description="Type VII secretion system protein EsaE">
    <location>
        <begin position="1"/>
        <end position="224"/>
    </location>
</feature>
<evidence type="ECO:0000269" key="1">
    <source>
    </source>
</evidence>
<evidence type="ECO:0000303" key="2">
    <source>
    </source>
</evidence>
<accession>Q2G181</accession>
<protein>
    <recommendedName>
        <fullName>Type VII secretion system protein EsaE</fullName>
    </recommendedName>
</protein>